<evidence type="ECO:0000255" key="1">
    <source>
        <dbReference type="HAMAP-Rule" id="MF_01959"/>
    </source>
</evidence>
<feature type="chain" id="PRO_0000238810" description="Cytochrome c-type biogenesis protein CcmE">
    <location>
        <begin position="1"/>
        <end position="160"/>
    </location>
</feature>
<feature type="topological domain" description="Cytoplasmic" evidence="1">
    <location>
        <begin position="1"/>
        <end position="8"/>
    </location>
</feature>
<feature type="transmembrane region" description="Helical; Signal-anchor for type II membrane protein" evidence="1">
    <location>
        <begin position="9"/>
        <end position="29"/>
    </location>
</feature>
<feature type="topological domain" description="Periplasmic" evidence="1">
    <location>
        <begin position="30"/>
        <end position="160"/>
    </location>
</feature>
<feature type="binding site" description="covalent" evidence="1">
    <location>
        <position position="130"/>
    </location>
    <ligand>
        <name>heme</name>
        <dbReference type="ChEBI" id="CHEBI:30413"/>
    </ligand>
</feature>
<feature type="binding site" description="axial binding residue" evidence="1">
    <location>
        <position position="134"/>
    </location>
    <ligand>
        <name>heme</name>
        <dbReference type="ChEBI" id="CHEBI:30413"/>
    </ligand>
    <ligandPart>
        <name>Fe</name>
        <dbReference type="ChEBI" id="CHEBI:18248"/>
    </ligandPart>
</feature>
<name>CCME_PECAS</name>
<gene>
    <name evidence="1" type="primary">ccmE</name>
    <name evidence="1" type="synonym">cycJ</name>
    <name type="ordered locus">ECA1886</name>
</gene>
<sequence length="160" mass="17364">MSAPRKTRLYAILAVVCGAVLTIALMLYALSSNIDLFYTPSEILYGKNETQEKPAIGQRLRVGGMVMPGSVRRDSQSLEVRFTVYDAKGSVDVTYNGMLPDLFREGQGVVAQGILDTDDHIAAKEVLARHDENYTPPEIKAAMEGQNGHAPAAGPEGKRL</sequence>
<comment type="function">
    <text evidence="1">Heme chaperone required for the biogenesis of c-type cytochromes. Transiently binds heme delivered by CcmC and transfers the heme to apo-cytochromes in a process facilitated by CcmF and CcmH.</text>
</comment>
<comment type="subcellular location">
    <subcellularLocation>
        <location evidence="1">Cell inner membrane</location>
        <topology evidence="1">Single-pass type II membrane protein</topology>
        <orientation evidence="1">Periplasmic side</orientation>
    </subcellularLocation>
</comment>
<comment type="similarity">
    <text evidence="1">Belongs to the CcmE/CycJ family.</text>
</comment>
<proteinExistence type="inferred from homology"/>
<keyword id="KW-0997">Cell inner membrane</keyword>
<keyword id="KW-1003">Cell membrane</keyword>
<keyword id="KW-0201">Cytochrome c-type biogenesis</keyword>
<keyword id="KW-0349">Heme</keyword>
<keyword id="KW-0408">Iron</keyword>
<keyword id="KW-0472">Membrane</keyword>
<keyword id="KW-0479">Metal-binding</keyword>
<keyword id="KW-1185">Reference proteome</keyword>
<keyword id="KW-0735">Signal-anchor</keyword>
<keyword id="KW-0812">Transmembrane</keyword>
<keyword id="KW-1133">Transmembrane helix</keyword>
<organism>
    <name type="scientific">Pectobacterium atrosepticum (strain SCRI 1043 / ATCC BAA-672)</name>
    <name type="common">Erwinia carotovora subsp. atroseptica</name>
    <dbReference type="NCBI Taxonomy" id="218491"/>
    <lineage>
        <taxon>Bacteria</taxon>
        <taxon>Pseudomonadati</taxon>
        <taxon>Pseudomonadota</taxon>
        <taxon>Gammaproteobacteria</taxon>
        <taxon>Enterobacterales</taxon>
        <taxon>Pectobacteriaceae</taxon>
        <taxon>Pectobacterium</taxon>
    </lineage>
</organism>
<accession>Q6D602</accession>
<reference key="1">
    <citation type="journal article" date="2004" name="Proc. Natl. Acad. Sci. U.S.A.">
        <title>Genome sequence of the enterobacterial phytopathogen Erwinia carotovora subsp. atroseptica and characterization of virulence factors.</title>
        <authorList>
            <person name="Bell K.S."/>
            <person name="Sebaihia M."/>
            <person name="Pritchard L."/>
            <person name="Holden M.T.G."/>
            <person name="Hyman L.J."/>
            <person name="Holeva M.C."/>
            <person name="Thomson N.R."/>
            <person name="Bentley S.D."/>
            <person name="Churcher L.J.C."/>
            <person name="Mungall K."/>
            <person name="Atkin R."/>
            <person name="Bason N."/>
            <person name="Brooks K."/>
            <person name="Chillingworth T."/>
            <person name="Clark K."/>
            <person name="Doggett J."/>
            <person name="Fraser A."/>
            <person name="Hance Z."/>
            <person name="Hauser H."/>
            <person name="Jagels K."/>
            <person name="Moule S."/>
            <person name="Norbertczak H."/>
            <person name="Ormond D."/>
            <person name="Price C."/>
            <person name="Quail M.A."/>
            <person name="Sanders M."/>
            <person name="Walker D."/>
            <person name="Whitehead S."/>
            <person name="Salmond G.P.C."/>
            <person name="Birch P.R.J."/>
            <person name="Parkhill J."/>
            <person name="Toth I.K."/>
        </authorList>
    </citation>
    <scope>NUCLEOTIDE SEQUENCE [LARGE SCALE GENOMIC DNA]</scope>
    <source>
        <strain>SCRI 1043 / ATCC BAA-672</strain>
    </source>
</reference>
<protein>
    <recommendedName>
        <fullName evidence="1">Cytochrome c-type biogenesis protein CcmE</fullName>
    </recommendedName>
    <alternativeName>
        <fullName evidence="1">Cytochrome c maturation protein E</fullName>
    </alternativeName>
    <alternativeName>
        <fullName evidence="1">Heme chaperone CcmE</fullName>
    </alternativeName>
</protein>
<dbReference type="EMBL" id="BX950851">
    <property type="protein sequence ID" value="CAG74789.1"/>
    <property type="molecule type" value="Genomic_DNA"/>
</dbReference>
<dbReference type="RefSeq" id="WP_011093454.1">
    <property type="nucleotide sequence ID" value="NC_004547.2"/>
</dbReference>
<dbReference type="SMR" id="Q6D602"/>
<dbReference type="STRING" id="218491.ECA1886"/>
<dbReference type="KEGG" id="eca:ECA1886"/>
<dbReference type="PATRIC" id="fig|218491.5.peg.1916"/>
<dbReference type="eggNOG" id="COG2332">
    <property type="taxonomic scope" value="Bacteria"/>
</dbReference>
<dbReference type="HOGENOM" id="CLU_079503_1_0_6"/>
<dbReference type="OrthoDB" id="9793584at2"/>
<dbReference type="Proteomes" id="UP000007966">
    <property type="component" value="Chromosome"/>
</dbReference>
<dbReference type="GO" id="GO:0005886">
    <property type="term" value="C:plasma membrane"/>
    <property type="evidence" value="ECO:0007669"/>
    <property type="project" value="UniProtKB-SubCell"/>
</dbReference>
<dbReference type="GO" id="GO:0020037">
    <property type="term" value="F:heme binding"/>
    <property type="evidence" value="ECO:0007669"/>
    <property type="project" value="InterPro"/>
</dbReference>
<dbReference type="GO" id="GO:0046872">
    <property type="term" value="F:metal ion binding"/>
    <property type="evidence" value="ECO:0007669"/>
    <property type="project" value="UniProtKB-KW"/>
</dbReference>
<dbReference type="GO" id="GO:0017004">
    <property type="term" value="P:cytochrome complex assembly"/>
    <property type="evidence" value="ECO:0007669"/>
    <property type="project" value="UniProtKB-KW"/>
</dbReference>
<dbReference type="FunFam" id="2.40.50.140:FF:000104">
    <property type="entry name" value="Cytochrome c-type biogenesis protein CcmE"/>
    <property type="match status" value="1"/>
</dbReference>
<dbReference type="Gene3D" id="2.40.50.140">
    <property type="entry name" value="Nucleic acid-binding proteins"/>
    <property type="match status" value="1"/>
</dbReference>
<dbReference type="HAMAP" id="MF_01959">
    <property type="entry name" value="CcmE"/>
    <property type="match status" value="1"/>
</dbReference>
<dbReference type="InterPro" id="IPR004329">
    <property type="entry name" value="CcmE"/>
</dbReference>
<dbReference type="InterPro" id="IPR036127">
    <property type="entry name" value="CcmE-like_sf"/>
</dbReference>
<dbReference type="InterPro" id="IPR012340">
    <property type="entry name" value="NA-bd_OB-fold"/>
</dbReference>
<dbReference type="NCBIfam" id="NF009638">
    <property type="entry name" value="PRK13165.1"/>
    <property type="match status" value="1"/>
</dbReference>
<dbReference type="NCBIfam" id="NF009727">
    <property type="entry name" value="PRK13254.1-1"/>
    <property type="match status" value="1"/>
</dbReference>
<dbReference type="NCBIfam" id="NF009729">
    <property type="entry name" value="PRK13254.1-3"/>
    <property type="match status" value="1"/>
</dbReference>
<dbReference type="PANTHER" id="PTHR34128">
    <property type="entry name" value="CYTOCHROME C-TYPE BIOGENESIS PROTEIN CCME HOMOLOG, MITOCHONDRIAL"/>
    <property type="match status" value="1"/>
</dbReference>
<dbReference type="PANTHER" id="PTHR34128:SF2">
    <property type="entry name" value="CYTOCHROME C-TYPE BIOGENESIS PROTEIN CCME HOMOLOG, MITOCHONDRIAL"/>
    <property type="match status" value="1"/>
</dbReference>
<dbReference type="Pfam" id="PF03100">
    <property type="entry name" value="CcmE"/>
    <property type="match status" value="1"/>
</dbReference>
<dbReference type="SUPFAM" id="SSF82093">
    <property type="entry name" value="Heme chaperone CcmE"/>
    <property type="match status" value="1"/>
</dbReference>